<name>SUCC_BURP1</name>
<protein>
    <recommendedName>
        <fullName evidence="1">Succinate--CoA ligase [ADP-forming] subunit beta</fullName>
        <ecNumber evidence="1">6.2.1.5</ecNumber>
    </recommendedName>
    <alternativeName>
        <fullName evidence="1">Succinyl-CoA synthetase subunit beta</fullName>
        <shortName evidence="1">SCS-beta</shortName>
    </alternativeName>
</protein>
<gene>
    <name evidence="1" type="primary">sucC</name>
    <name type="ordered locus">BURPS1710b_0975</name>
</gene>
<keyword id="KW-0067">ATP-binding</keyword>
<keyword id="KW-0436">Ligase</keyword>
<keyword id="KW-0460">Magnesium</keyword>
<keyword id="KW-0479">Metal-binding</keyword>
<keyword id="KW-0547">Nucleotide-binding</keyword>
<keyword id="KW-0816">Tricarboxylic acid cycle</keyword>
<sequence length="388" mass="41286">MKIHEYQGKEILRKFGVAVPRGKPAFSVDEAVKVAQELGGPVWVVKAQIHAGGRGKGGGVKVAKSLEQVREYSNQILGMQLKTHQTGPEGQKVNRLLIEEGADIKKELYVGIVIDRVSQKVVVMASSEGGMDIEEVAEKTPEAIHKVAVEPSVGLQDAEADDLAKKIGVPDASIPQAREILKGLYKSFWETDASLAEINPLVLTGDGKVIALDAKFNFDSNALFRHPEIVAYRDLDEEDPAEIEASKFDLAYISLDGNIGCLVNGAGLAMATMDTIKLFGGEPANFLDVGGGATTEKVTEAFKLMLKNPGLKAILVNIFGGIMRCDVIAEGVIAGSKAVNLNVPLVVRMKGTNEDLGKKMLAESGLPIISADSMEEAAQKVVAAAAGK</sequence>
<comment type="function">
    <text evidence="1">Succinyl-CoA synthetase functions in the citric acid cycle (TCA), coupling the hydrolysis of succinyl-CoA to the synthesis of either ATP or GTP and thus represents the only step of substrate-level phosphorylation in the TCA. The beta subunit provides nucleotide specificity of the enzyme and binds the substrate succinate, while the binding sites for coenzyme A and phosphate are found in the alpha subunit.</text>
</comment>
<comment type="catalytic activity">
    <reaction evidence="1">
        <text>succinate + ATP + CoA = succinyl-CoA + ADP + phosphate</text>
        <dbReference type="Rhea" id="RHEA:17661"/>
        <dbReference type="ChEBI" id="CHEBI:30031"/>
        <dbReference type="ChEBI" id="CHEBI:30616"/>
        <dbReference type="ChEBI" id="CHEBI:43474"/>
        <dbReference type="ChEBI" id="CHEBI:57287"/>
        <dbReference type="ChEBI" id="CHEBI:57292"/>
        <dbReference type="ChEBI" id="CHEBI:456216"/>
        <dbReference type="EC" id="6.2.1.5"/>
    </reaction>
    <physiologicalReaction direction="right-to-left" evidence="1">
        <dbReference type="Rhea" id="RHEA:17663"/>
    </physiologicalReaction>
</comment>
<comment type="catalytic activity">
    <reaction evidence="1">
        <text>GTP + succinate + CoA = succinyl-CoA + GDP + phosphate</text>
        <dbReference type="Rhea" id="RHEA:22120"/>
        <dbReference type="ChEBI" id="CHEBI:30031"/>
        <dbReference type="ChEBI" id="CHEBI:37565"/>
        <dbReference type="ChEBI" id="CHEBI:43474"/>
        <dbReference type="ChEBI" id="CHEBI:57287"/>
        <dbReference type="ChEBI" id="CHEBI:57292"/>
        <dbReference type="ChEBI" id="CHEBI:58189"/>
    </reaction>
    <physiologicalReaction direction="right-to-left" evidence="1">
        <dbReference type="Rhea" id="RHEA:22122"/>
    </physiologicalReaction>
</comment>
<comment type="cofactor">
    <cofactor evidence="1">
        <name>Mg(2+)</name>
        <dbReference type="ChEBI" id="CHEBI:18420"/>
    </cofactor>
    <text evidence="1">Binds 1 Mg(2+) ion per subunit.</text>
</comment>
<comment type="pathway">
    <text evidence="1">Carbohydrate metabolism; tricarboxylic acid cycle; succinate from succinyl-CoA (ligase route): step 1/1.</text>
</comment>
<comment type="subunit">
    <text evidence="1">Heterotetramer of two alpha and two beta subunits.</text>
</comment>
<comment type="similarity">
    <text evidence="1">Belongs to the succinate/malate CoA ligase beta subunit family.</text>
</comment>
<dbReference type="EC" id="6.2.1.5" evidence="1"/>
<dbReference type="EMBL" id="CP000124">
    <property type="protein sequence ID" value="ABA50523.1"/>
    <property type="molecule type" value="Genomic_DNA"/>
</dbReference>
<dbReference type="RefSeq" id="WP_004189251.1">
    <property type="nucleotide sequence ID" value="NC_007434.1"/>
</dbReference>
<dbReference type="SMR" id="Q3JVL5"/>
<dbReference type="EnsemblBacteria" id="ABA50523">
    <property type="protein sequence ID" value="ABA50523"/>
    <property type="gene ID" value="BURPS1710b_0975"/>
</dbReference>
<dbReference type="GeneID" id="92978047"/>
<dbReference type="KEGG" id="bpm:BURPS1710b_0975"/>
<dbReference type="HOGENOM" id="CLU_037430_0_2_4"/>
<dbReference type="UniPathway" id="UPA00223">
    <property type="reaction ID" value="UER00999"/>
</dbReference>
<dbReference type="Proteomes" id="UP000002700">
    <property type="component" value="Chromosome I"/>
</dbReference>
<dbReference type="GO" id="GO:0005829">
    <property type="term" value="C:cytosol"/>
    <property type="evidence" value="ECO:0007669"/>
    <property type="project" value="TreeGrafter"/>
</dbReference>
<dbReference type="GO" id="GO:0042709">
    <property type="term" value="C:succinate-CoA ligase complex"/>
    <property type="evidence" value="ECO:0007669"/>
    <property type="project" value="TreeGrafter"/>
</dbReference>
<dbReference type="GO" id="GO:0005524">
    <property type="term" value="F:ATP binding"/>
    <property type="evidence" value="ECO:0007669"/>
    <property type="project" value="UniProtKB-UniRule"/>
</dbReference>
<dbReference type="GO" id="GO:0000287">
    <property type="term" value="F:magnesium ion binding"/>
    <property type="evidence" value="ECO:0007669"/>
    <property type="project" value="UniProtKB-UniRule"/>
</dbReference>
<dbReference type="GO" id="GO:0004775">
    <property type="term" value="F:succinate-CoA ligase (ADP-forming) activity"/>
    <property type="evidence" value="ECO:0007669"/>
    <property type="project" value="UniProtKB-UniRule"/>
</dbReference>
<dbReference type="GO" id="GO:0004776">
    <property type="term" value="F:succinate-CoA ligase (GDP-forming) activity"/>
    <property type="evidence" value="ECO:0007669"/>
    <property type="project" value="RHEA"/>
</dbReference>
<dbReference type="GO" id="GO:0006104">
    <property type="term" value="P:succinyl-CoA metabolic process"/>
    <property type="evidence" value="ECO:0007669"/>
    <property type="project" value="TreeGrafter"/>
</dbReference>
<dbReference type="GO" id="GO:0006099">
    <property type="term" value="P:tricarboxylic acid cycle"/>
    <property type="evidence" value="ECO:0007669"/>
    <property type="project" value="UniProtKB-UniRule"/>
</dbReference>
<dbReference type="FunFam" id="3.30.1490.20:FF:000002">
    <property type="entry name" value="Succinate--CoA ligase [ADP-forming] subunit beta"/>
    <property type="match status" value="1"/>
</dbReference>
<dbReference type="FunFam" id="3.30.470.20:FF:000002">
    <property type="entry name" value="Succinate--CoA ligase [ADP-forming] subunit beta"/>
    <property type="match status" value="1"/>
</dbReference>
<dbReference type="FunFam" id="3.40.50.261:FF:000001">
    <property type="entry name" value="Succinate--CoA ligase [ADP-forming] subunit beta"/>
    <property type="match status" value="1"/>
</dbReference>
<dbReference type="Gene3D" id="3.30.1490.20">
    <property type="entry name" value="ATP-grasp fold, A domain"/>
    <property type="match status" value="1"/>
</dbReference>
<dbReference type="Gene3D" id="3.30.470.20">
    <property type="entry name" value="ATP-grasp fold, B domain"/>
    <property type="match status" value="1"/>
</dbReference>
<dbReference type="Gene3D" id="3.40.50.261">
    <property type="entry name" value="Succinyl-CoA synthetase domains"/>
    <property type="match status" value="1"/>
</dbReference>
<dbReference type="HAMAP" id="MF_00558">
    <property type="entry name" value="Succ_CoA_beta"/>
    <property type="match status" value="1"/>
</dbReference>
<dbReference type="InterPro" id="IPR011761">
    <property type="entry name" value="ATP-grasp"/>
</dbReference>
<dbReference type="InterPro" id="IPR013650">
    <property type="entry name" value="ATP-grasp_succ-CoA_synth-type"/>
</dbReference>
<dbReference type="InterPro" id="IPR013815">
    <property type="entry name" value="ATP_grasp_subdomain_1"/>
</dbReference>
<dbReference type="InterPro" id="IPR017866">
    <property type="entry name" value="Succ-CoA_synthase_bsu_CS"/>
</dbReference>
<dbReference type="InterPro" id="IPR005811">
    <property type="entry name" value="SUCC_ACL_C"/>
</dbReference>
<dbReference type="InterPro" id="IPR005809">
    <property type="entry name" value="Succ_CoA_ligase-like_bsu"/>
</dbReference>
<dbReference type="InterPro" id="IPR016102">
    <property type="entry name" value="Succinyl-CoA_synth-like"/>
</dbReference>
<dbReference type="NCBIfam" id="NF001913">
    <property type="entry name" value="PRK00696.1"/>
    <property type="match status" value="1"/>
</dbReference>
<dbReference type="NCBIfam" id="TIGR01016">
    <property type="entry name" value="sucCoAbeta"/>
    <property type="match status" value="1"/>
</dbReference>
<dbReference type="PANTHER" id="PTHR11815:SF10">
    <property type="entry name" value="SUCCINATE--COA LIGASE [GDP-FORMING] SUBUNIT BETA, MITOCHONDRIAL"/>
    <property type="match status" value="1"/>
</dbReference>
<dbReference type="PANTHER" id="PTHR11815">
    <property type="entry name" value="SUCCINYL-COA SYNTHETASE BETA CHAIN"/>
    <property type="match status" value="1"/>
</dbReference>
<dbReference type="Pfam" id="PF08442">
    <property type="entry name" value="ATP-grasp_2"/>
    <property type="match status" value="1"/>
</dbReference>
<dbReference type="Pfam" id="PF00549">
    <property type="entry name" value="Ligase_CoA"/>
    <property type="match status" value="1"/>
</dbReference>
<dbReference type="PIRSF" id="PIRSF001554">
    <property type="entry name" value="SucCS_beta"/>
    <property type="match status" value="1"/>
</dbReference>
<dbReference type="SUPFAM" id="SSF56059">
    <property type="entry name" value="Glutathione synthetase ATP-binding domain-like"/>
    <property type="match status" value="1"/>
</dbReference>
<dbReference type="SUPFAM" id="SSF52210">
    <property type="entry name" value="Succinyl-CoA synthetase domains"/>
    <property type="match status" value="1"/>
</dbReference>
<dbReference type="PROSITE" id="PS50975">
    <property type="entry name" value="ATP_GRASP"/>
    <property type="match status" value="1"/>
</dbReference>
<dbReference type="PROSITE" id="PS01217">
    <property type="entry name" value="SUCCINYL_COA_LIG_3"/>
    <property type="match status" value="1"/>
</dbReference>
<accession>Q3JVL5</accession>
<proteinExistence type="inferred from homology"/>
<reference key="1">
    <citation type="journal article" date="2010" name="Genome Biol. Evol.">
        <title>Continuing evolution of Burkholderia mallei through genome reduction and large-scale rearrangements.</title>
        <authorList>
            <person name="Losada L."/>
            <person name="Ronning C.M."/>
            <person name="DeShazer D."/>
            <person name="Woods D."/>
            <person name="Fedorova N."/>
            <person name="Kim H.S."/>
            <person name="Shabalina S.A."/>
            <person name="Pearson T.R."/>
            <person name="Brinkac L."/>
            <person name="Tan P."/>
            <person name="Nandi T."/>
            <person name="Crabtree J."/>
            <person name="Badger J."/>
            <person name="Beckstrom-Sternberg S."/>
            <person name="Saqib M."/>
            <person name="Schutzer S.E."/>
            <person name="Keim P."/>
            <person name="Nierman W.C."/>
        </authorList>
    </citation>
    <scope>NUCLEOTIDE SEQUENCE [LARGE SCALE GENOMIC DNA]</scope>
    <source>
        <strain>1710b</strain>
    </source>
</reference>
<evidence type="ECO:0000255" key="1">
    <source>
        <dbReference type="HAMAP-Rule" id="MF_00558"/>
    </source>
</evidence>
<feature type="chain" id="PRO_1000082043" description="Succinate--CoA ligase [ADP-forming] subunit beta">
    <location>
        <begin position="1"/>
        <end position="388"/>
    </location>
</feature>
<feature type="domain" description="ATP-grasp" evidence="1">
    <location>
        <begin position="9"/>
        <end position="244"/>
    </location>
</feature>
<feature type="binding site" evidence="1">
    <location>
        <position position="46"/>
    </location>
    <ligand>
        <name>ATP</name>
        <dbReference type="ChEBI" id="CHEBI:30616"/>
    </ligand>
</feature>
<feature type="binding site" evidence="1">
    <location>
        <begin position="53"/>
        <end position="55"/>
    </location>
    <ligand>
        <name>ATP</name>
        <dbReference type="ChEBI" id="CHEBI:30616"/>
    </ligand>
</feature>
<feature type="binding site" evidence="1">
    <location>
        <position position="99"/>
    </location>
    <ligand>
        <name>ATP</name>
        <dbReference type="ChEBI" id="CHEBI:30616"/>
    </ligand>
</feature>
<feature type="binding site" evidence="1">
    <location>
        <position position="102"/>
    </location>
    <ligand>
        <name>ATP</name>
        <dbReference type="ChEBI" id="CHEBI:30616"/>
    </ligand>
</feature>
<feature type="binding site" evidence="1">
    <location>
        <position position="107"/>
    </location>
    <ligand>
        <name>ATP</name>
        <dbReference type="ChEBI" id="CHEBI:30616"/>
    </ligand>
</feature>
<feature type="binding site" evidence="1">
    <location>
        <position position="199"/>
    </location>
    <ligand>
        <name>Mg(2+)</name>
        <dbReference type="ChEBI" id="CHEBI:18420"/>
    </ligand>
</feature>
<feature type="binding site" evidence="1">
    <location>
        <position position="213"/>
    </location>
    <ligand>
        <name>Mg(2+)</name>
        <dbReference type="ChEBI" id="CHEBI:18420"/>
    </ligand>
</feature>
<feature type="binding site" evidence="1">
    <location>
        <position position="264"/>
    </location>
    <ligand>
        <name>substrate</name>
        <note>ligand shared with subunit alpha</note>
    </ligand>
</feature>
<feature type="binding site" evidence="1">
    <location>
        <begin position="321"/>
        <end position="323"/>
    </location>
    <ligand>
        <name>substrate</name>
        <note>ligand shared with subunit alpha</note>
    </ligand>
</feature>
<organism>
    <name type="scientific">Burkholderia pseudomallei (strain 1710b)</name>
    <dbReference type="NCBI Taxonomy" id="320372"/>
    <lineage>
        <taxon>Bacteria</taxon>
        <taxon>Pseudomonadati</taxon>
        <taxon>Pseudomonadota</taxon>
        <taxon>Betaproteobacteria</taxon>
        <taxon>Burkholderiales</taxon>
        <taxon>Burkholderiaceae</taxon>
        <taxon>Burkholderia</taxon>
        <taxon>pseudomallei group</taxon>
    </lineage>
</organism>